<sequence length="218" mass="24461">MSSKRTSPNGKQRLLNFLRGLLEDDSHSDLITWSNKDTLEFQMLKPHKVAELWGAATGNPGMNYDKMSRGLRYFYTNNTLKKVKGKDSRYCFLDTPLLAPFPDFFPKANEPMRRVPLFSIENLLASSEETTSNFSLQSSPSSSSNSSSARTMSATSSPTSSLEDVINPPVLIDPFQMQMAHITQTFLATQLPALQAFPMQLQLQFLKTLLPTLFPNNN</sequence>
<protein>
    <recommendedName>
        <fullName evidence="6">ETS domain-containing protein ets-7</fullName>
    </recommendedName>
    <alternativeName>
        <fullName evidence="8">ETS class transcription factor ets-7</fullName>
    </alternativeName>
</protein>
<gene>
    <name evidence="8" type="primary">ets-7</name>
    <name evidence="8" type="ORF">F19F10.5</name>
</gene>
<evidence type="ECO:0000250" key="1">
    <source>
        <dbReference type="UniProtKB" id="P41212"/>
    </source>
</evidence>
<evidence type="ECO:0000255" key="2">
    <source>
        <dbReference type="PROSITE-ProRule" id="PRU00237"/>
    </source>
</evidence>
<evidence type="ECO:0000255" key="3">
    <source>
        <dbReference type="RuleBase" id="RU004019"/>
    </source>
</evidence>
<evidence type="ECO:0000256" key="4">
    <source>
        <dbReference type="SAM" id="MobiDB-lite"/>
    </source>
</evidence>
<evidence type="ECO:0000269" key="5">
    <source>
    </source>
</evidence>
<evidence type="ECO:0000305" key="6"/>
<evidence type="ECO:0000312" key="7">
    <source>
        <dbReference type="Proteomes" id="UP000001940"/>
    </source>
</evidence>
<evidence type="ECO:0000312" key="8">
    <source>
        <dbReference type="WormBase" id="F19F10.5"/>
    </source>
</evidence>
<reference evidence="7" key="1">
    <citation type="journal article" date="1998" name="Science">
        <title>Genome sequence of the nematode C. elegans: a platform for investigating biology.</title>
        <authorList>
            <consortium name="The C. elegans sequencing consortium"/>
        </authorList>
    </citation>
    <scope>NUCLEOTIDE SEQUENCE [LARGE SCALE GENOMIC DNA]</scope>
    <source>
        <strain evidence="7">Bristol N2</strain>
    </source>
</reference>
<reference evidence="6" key="2">
    <citation type="journal article" date="2016" name="Aging (Albany NY)">
        <title>Scavengers of reactive gamma-ketoaldehydes extend Caenorhabditis elegans lifespan and healthspan through protein-level interactions with SIR-2.1 and ETS-7.</title>
        <authorList>
            <person name="Nguyen T.T."/>
            <person name="Caito S.W."/>
            <person name="Zackert W.E."/>
            <person name="West J.D."/>
            <person name="Zhu S."/>
            <person name="Aschner M."/>
            <person name="Fessel J.P."/>
            <person name="Roberts L.J. II"/>
        </authorList>
    </citation>
    <scope>FUNCTION</scope>
    <scope>INDUCTION</scope>
</reference>
<keyword id="KW-0238">DNA-binding</keyword>
<keyword id="KW-0539">Nucleus</keyword>
<keyword id="KW-1185">Reference proteome</keyword>
<keyword id="KW-0804">Transcription</keyword>
<keyword id="KW-0805">Transcription regulation</keyword>
<organism evidence="7">
    <name type="scientific">Caenorhabditis elegans</name>
    <dbReference type="NCBI Taxonomy" id="6239"/>
    <lineage>
        <taxon>Eukaryota</taxon>
        <taxon>Metazoa</taxon>
        <taxon>Ecdysozoa</taxon>
        <taxon>Nematoda</taxon>
        <taxon>Chromadorea</taxon>
        <taxon>Rhabditida</taxon>
        <taxon>Rhabditina</taxon>
        <taxon>Rhabditomorpha</taxon>
        <taxon>Rhabditoidea</taxon>
        <taxon>Rhabditidae</taxon>
        <taxon>Peloderinae</taxon>
        <taxon>Caenorhabditis</taxon>
    </lineage>
</organism>
<accession>O01519</accession>
<proteinExistence type="evidence at transcript level"/>
<comment type="function">
    <text evidence="1 5">Probable transcription factor (By similarity). Involved in responses to oxidative stress (PubMed:27514077).</text>
</comment>
<comment type="subcellular location">
    <subcellularLocation>
        <location evidence="2">Nucleus</location>
    </subcellularLocation>
</comment>
<comment type="induction">
    <text evidence="5">Up-regulated by salicylamine.</text>
</comment>
<comment type="similarity">
    <text evidence="3">Belongs to the ETS family.</text>
</comment>
<feature type="chain" id="PRO_0000455600" description="ETS domain-containing protein ets-7">
    <location>
        <begin position="1"/>
        <end position="218"/>
    </location>
</feature>
<feature type="DNA-binding region" description="ETS" evidence="2">
    <location>
        <begin position="12"/>
        <end position="93"/>
    </location>
</feature>
<feature type="region of interest" description="Disordered" evidence="4">
    <location>
        <begin position="131"/>
        <end position="162"/>
    </location>
</feature>
<feature type="compositionally biased region" description="Low complexity" evidence="4">
    <location>
        <begin position="131"/>
        <end position="161"/>
    </location>
</feature>
<name>ETS7_CAEEL</name>
<dbReference type="EMBL" id="BX284605">
    <property type="protein sequence ID" value="CCD67764.1"/>
    <property type="molecule type" value="Genomic_DNA"/>
</dbReference>
<dbReference type="RefSeq" id="NP_504947.2">
    <property type="nucleotide sequence ID" value="NM_072546.4"/>
</dbReference>
<dbReference type="SMR" id="O01519"/>
<dbReference type="FunCoup" id="O01519">
    <property type="interactions" value="249"/>
</dbReference>
<dbReference type="IntAct" id="O01519">
    <property type="interactions" value="2"/>
</dbReference>
<dbReference type="STRING" id="6239.F19F10.5.1"/>
<dbReference type="PaxDb" id="6239-F19F10.5"/>
<dbReference type="EnsemblMetazoa" id="F19F10.5.1">
    <property type="protein sequence ID" value="F19F10.5.1"/>
    <property type="gene ID" value="WBGene00017601"/>
</dbReference>
<dbReference type="GeneID" id="184687"/>
<dbReference type="KEGG" id="cel:CELE_F19F10.5"/>
<dbReference type="UCSC" id="F19F10.5">
    <property type="organism name" value="c. elegans"/>
</dbReference>
<dbReference type="AGR" id="WB:WBGene00017601"/>
<dbReference type="CTD" id="184687"/>
<dbReference type="WormBase" id="F19F10.5">
    <property type="protein sequence ID" value="CE43542"/>
    <property type="gene ID" value="WBGene00017601"/>
    <property type="gene designation" value="ets-7"/>
</dbReference>
<dbReference type="eggNOG" id="KOG3806">
    <property type="taxonomic scope" value="Eukaryota"/>
</dbReference>
<dbReference type="GeneTree" id="ENSGT00970000196452"/>
<dbReference type="HOGENOM" id="CLU_109510_0_0_1"/>
<dbReference type="InParanoid" id="O01519"/>
<dbReference type="OMA" id="MQMAHIT"/>
<dbReference type="OrthoDB" id="5816770at2759"/>
<dbReference type="PhylomeDB" id="O01519"/>
<dbReference type="Reactome" id="R-CEL-8939245">
    <property type="pathway name" value="RUNX1 regulates transcription of genes involved in BCR signaling"/>
</dbReference>
<dbReference type="PRO" id="PR:O01519"/>
<dbReference type="Proteomes" id="UP000001940">
    <property type="component" value="Chromosome V"/>
</dbReference>
<dbReference type="Bgee" id="WBGene00017601">
    <property type="expression patterns" value="Expressed in embryo and 3 other cell types or tissues"/>
</dbReference>
<dbReference type="GO" id="GO:0005634">
    <property type="term" value="C:nucleus"/>
    <property type="evidence" value="ECO:0000318"/>
    <property type="project" value="GO_Central"/>
</dbReference>
<dbReference type="GO" id="GO:0000981">
    <property type="term" value="F:DNA-binding transcription factor activity, RNA polymerase II-specific"/>
    <property type="evidence" value="ECO:0000318"/>
    <property type="project" value="GO_Central"/>
</dbReference>
<dbReference type="GO" id="GO:0043565">
    <property type="term" value="F:sequence-specific DNA binding"/>
    <property type="evidence" value="ECO:0007669"/>
    <property type="project" value="InterPro"/>
</dbReference>
<dbReference type="GO" id="GO:0030154">
    <property type="term" value="P:cell differentiation"/>
    <property type="evidence" value="ECO:0000318"/>
    <property type="project" value="GO_Central"/>
</dbReference>
<dbReference type="GO" id="GO:0006357">
    <property type="term" value="P:regulation of transcription by RNA polymerase II"/>
    <property type="evidence" value="ECO:0000318"/>
    <property type="project" value="GO_Central"/>
</dbReference>
<dbReference type="GO" id="GO:0006979">
    <property type="term" value="P:response to oxidative stress"/>
    <property type="evidence" value="ECO:0000315"/>
    <property type="project" value="UniProtKB"/>
</dbReference>
<dbReference type="Gene3D" id="1.10.10.10">
    <property type="entry name" value="Winged helix-like DNA-binding domain superfamily/Winged helix DNA-binding domain"/>
    <property type="match status" value="1"/>
</dbReference>
<dbReference type="InterPro" id="IPR000418">
    <property type="entry name" value="Ets_dom"/>
</dbReference>
<dbReference type="InterPro" id="IPR046328">
    <property type="entry name" value="ETS_fam"/>
</dbReference>
<dbReference type="InterPro" id="IPR036388">
    <property type="entry name" value="WH-like_DNA-bd_sf"/>
</dbReference>
<dbReference type="InterPro" id="IPR036390">
    <property type="entry name" value="WH_DNA-bd_sf"/>
</dbReference>
<dbReference type="PANTHER" id="PTHR11849">
    <property type="entry name" value="ETS"/>
    <property type="match status" value="1"/>
</dbReference>
<dbReference type="PANTHER" id="PTHR11849:SF302">
    <property type="entry name" value="ETS DOMAIN-CONTAINING PROTEIN-RELATED"/>
    <property type="match status" value="1"/>
</dbReference>
<dbReference type="Pfam" id="PF00178">
    <property type="entry name" value="Ets"/>
    <property type="match status" value="1"/>
</dbReference>
<dbReference type="PRINTS" id="PR00454">
    <property type="entry name" value="ETSDOMAIN"/>
</dbReference>
<dbReference type="SMART" id="SM00413">
    <property type="entry name" value="ETS"/>
    <property type="match status" value="1"/>
</dbReference>
<dbReference type="SUPFAM" id="SSF46785">
    <property type="entry name" value="Winged helix' DNA-binding domain"/>
    <property type="match status" value="1"/>
</dbReference>
<dbReference type="PROSITE" id="PS50061">
    <property type="entry name" value="ETS_DOMAIN_3"/>
    <property type="match status" value="1"/>
</dbReference>